<accession>P43639</accession>
<accession>D6VUB8</accession>
<accession>Q9URG5</accession>
<feature type="initiator methionine" description="Removed" evidence="7 8">
    <location>
        <position position="1"/>
    </location>
</feature>
<feature type="chain" id="PRO_0000068257" description="Casein kinase II subunit beta">
    <location>
        <begin position="2"/>
        <end position="278"/>
    </location>
</feature>
<feature type="region of interest" description="Disordered" evidence="2">
    <location>
        <begin position="1"/>
        <end position="22"/>
    </location>
</feature>
<feature type="region of interest" description="Disordered" evidence="2">
    <location>
        <begin position="78"/>
        <end position="111"/>
    </location>
</feature>
<feature type="compositionally biased region" description="Acidic residues" evidence="2">
    <location>
        <begin position="78"/>
        <end position="94"/>
    </location>
</feature>
<feature type="modified residue" description="N-acetylserine" evidence="7 8">
    <location>
        <position position="2"/>
    </location>
</feature>
<feature type="modified residue" description="Phosphoserine" evidence="7">
    <location>
        <position position="2"/>
    </location>
</feature>
<reference key="1">
    <citation type="journal article" date="1995" name="J. Biol. Chem.">
        <title>Cloning and disruption of CKB1, the gene encoding the 38-kDa beta subunit of Saccharomyces cerevisiae casein kinase II (CKII). Deletion of CKII regulatory subunits elicits a salt-sensitive phenotype.</title>
        <authorList>
            <person name="Bidwai A.P."/>
            <person name="Reed J.C."/>
            <person name="Glover C.V.C."/>
        </authorList>
    </citation>
    <scope>NUCLEOTIDE SEQUENCE [GENOMIC DNA]</scope>
    <source>
        <strain>ATCC 204508 / S288c</strain>
    </source>
</reference>
<reference key="2">
    <citation type="journal article" date="1997" name="Nature">
        <title>The nucleotide sequence of Saccharomyces cerevisiae chromosome VII.</title>
        <authorList>
            <person name="Tettelin H."/>
            <person name="Agostoni-Carbone M.L."/>
            <person name="Albermann K."/>
            <person name="Albers M."/>
            <person name="Arroyo J."/>
            <person name="Backes U."/>
            <person name="Barreiros T."/>
            <person name="Bertani I."/>
            <person name="Bjourson A.J."/>
            <person name="Brueckner M."/>
            <person name="Bruschi C.V."/>
            <person name="Carignani G."/>
            <person name="Castagnoli L."/>
            <person name="Cerdan E."/>
            <person name="Clemente M.L."/>
            <person name="Coblenz A."/>
            <person name="Coglievina M."/>
            <person name="Coissac E."/>
            <person name="Defoor E."/>
            <person name="Del Bino S."/>
            <person name="Delius H."/>
            <person name="Delneri D."/>
            <person name="de Wergifosse P."/>
            <person name="Dujon B."/>
            <person name="Durand P."/>
            <person name="Entian K.-D."/>
            <person name="Eraso P."/>
            <person name="Escribano V."/>
            <person name="Fabiani L."/>
            <person name="Fartmann B."/>
            <person name="Feroli F."/>
            <person name="Feuermann M."/>
            <person name="Frontali L."/>
            <person name="Garcia-Gonzalez M."/>
            <person name="Garcia-Saez M.I."/>
            <person name="Goffeau A."/>
            <person name="Guerreiro P."/>
            <person name="Hani J."/>
            <person name="Hansen M."/>
            <person name="Hebling U."/>
            <person name="Hernandez K."/>
            <person name="Heumann K."/>
            <person name="Hilger F."/>
            <person name="Hofmann B."/>
            <person name="Indge K.J."/>
            <person name="James C.M."/>
            <person name="Klima R."/>
            <person name="Koetter P."/>
            <person name="Kramer B."/>
            <person name="Kramer W."/>
            <person name="Lauquin G."/>
            <person name="Leuther H."/>
            <person name="Louis E.J."/>
            <person name="Maillier E."/>
            <person name="Marconi A."/>
            <person name="Martegani E."/>
            <person name="Mazon M.J."/>
            <person name="Mazzoni C."/>
            <person name="McReynolds A.D.K."/>
            <person name="Melchioretto P."/>
            <person name="Mewes H.-W."/>
            <person name="Minenkova O."/>
            <person name="Mueller-Auer S."/>
            <person name="Nawrocki A."/>
            <person name="Netter P."/>
            <person name="Neu R."/>
            <person name="Nombela C."/>
            <person name="Oliver S.G."/>
            <person name="Panzeri L."/>
            <person name="Paoluzi S."/>
            <person name="Plevani P."/>
            <person name="Portetelle D."/>
            <person name="Portillo F."/>
            <person name="Potier S."/>
            <person name="Purnelle B."/>
            <person name="Rieger M."/>
            <person name="Riles L."/>
            <person name="Rinaldi T."/>
            <person name="Robben J."/>
            <person name="Rodrigues-Pousada C."/>
            <person name="Rodriguez-Belmonte E."/>
            <person name="Rodriguez-Torres A.M."/>
            <person name="Rose M."/>
            <person name="Ruzzi M."/>
            <person name="Saliola M."/>
            <person name="Sanchez-Perez M."/>
            <person name="Schaefer B."/>
            <person name="Schaefer M."/>
            <person name="Scharfe M."/>
            <person name="Schmidheini T."/>
            <person name="Schreer A."/>
            <person name="Skala J."/>
            <person name="Souciet J.-L."/>
            <person name="Steensma H.Y."/>
            <person name="Talla E."/>
            <person name="Thierry A."/>
            <person name="Vandenbol M."/>
            <person name="van der Aart Q.J.M."/>
            <person name="Van Dyck L."/>
            <person name="Vanoni M."/>
            <person name="Verhasselt P."/>
            <person name="Voet M."/>
            <person name="Volckaert G."/>
            <person name="Wambutt R."/>
            <person name="Watson M.D."/>
            <person name="Weber N."/>
            <person name="Wedler E."/>
            <person name="Wedler H."/>
            <person name="Wipfli P."/>
            <person name="Wolf K."/>
            <person name="Wright L.F."/>
            <person name="Zaccaria P."/>
            <person name="Zimmermann M."/>
            <person name="Zollner A."/>
            <person name="Kleine K."/>
        </authorList>
    </citation>
    <scope>NUCLEOTIDE SEQUENCE [LARGE SCALE GENOMIC DNA]</scope>
    <source>
        <strain>ATCC 204508 / S288c</strain>
    </source>
</reference>
<reference key="3">
    <citation type="journal article" date="2014" name="G3 (Bethesda)">
        <title>The reference genome sequence of Saccharomyces cerevisiae: Then and now.</title>
        <authorList>
            <person name="Engel S.R."/>
            <person name="Dietrich F.S."/>
            <person name="Fisk D.G."/>
            <person name="Binkley G."/>
            <person name="Balakrishnan R."/>
            <person name="Costanzo M.C."/>
            <person name="Dwight S.S."/>
            <person name="Hitz B.C."/>
            <person name="Karra K."/>
            <person name="Nash R.S."/>
            <person name="Weng S."/>
            <person name="Wong E.D."/>
            <person name="Lloyd P."/>
            <person name="Skrzypek M.S."/>
            <person name="Miyasato S.R."/>
            <person name="Simison M."/>
            <person name="Cherry J.M."/>
        </authorList>
    </citation>
    <scope>GENOME REANNOTATION</scope>
    <source>
        <strain>ATCC 204508 / S288c</strain>
    </source>
</reference>
<reference key="4">
    <citation type="journal article" date="1994" name="Arch. Biochem. Biophys.">
        <title>Casein kinase II of Saccharomyces cerevisiae contains two distinct regulatory subunits, beta and beta'.</title>
        <authorList>
            <person name="Bidwai A.P."/>
            <person name="Reed J.C."/>
            <person name="Glover C.V.C."/>
        </authorList>
    </citation>
    <scope>PROTEIN SEQUENCE OF 34-52; 182-196 AND 257-270</scope>
</reference>
<reference key="5">
    <citation type="journal article" date="2002" name="Mol. Cell. Biol.">
        <title>RNA polymerase II elongation factors of Saccharomyces cerevisiae: a targeted proteomics approach.</title>
        <authorList>
            <person name="Krogan N.J."/>
            <person name="Kim M."/>
            <person name="Ahn S.H."/>
            <person name="Zhong G."/>
            <person name="Kobor M.S."/>
            <person name="Cagney G."/>
            <person name="Emili A."/>
            <person name="Shilatifard A."/>
            <person name="Buratowski S."/>
            <person name="Greenblatt J.F."/>
        </authorList>
    </citation>
    <scope>INTERACTION WITH POB3 AND SPT16</scope>
</reference>
<reference key="6">
    <citation type="journal article" date="2003" name="Nature">
        <title>Global analysis of protein expression in yeast.</title>
        <authorList>
            <person name="Ghaemmaghami S."/>
            <person name="Huh W.-K."/>
            <person name="Bower K."/>
            <person name="Howson R.W."/>
            <person name="Belle A."/>
            <person name="Dephoure N."/>
            <person name="O'Shea E.K."/>
            <person name="Weissman J.S."/>
        </authorList>
    </citation>
    <scope>LEVEL OF PROTEIN EXPRESSION [LARGE SCALE ANALYSIS]</scope>
</reference>
<reference key="7">
    <citation type="journal article" date="2005" name="Mol. Cell. Proteomics">
        <title>Quantitative phosphoproteomics applied to the yeast pheromone signaling pathway.</title>
        <authorList>
            <person name="Gruhler A."/>
            <person name="Olsen J.V."/>
            <person name="Mohammed S."/>
            <person name="Mortensen P."/>
            <person name="Faergeman N.J."/>
            <person name="Mann M."/>
            <person name="Jensen O.N."/>
        </authorList>
    </citation>
    <scope>ACETYLATION [LARGE SCALE ANALYSIS] AT SER-2</scope>
    <scope>PHOSPHORYLATION [LARGE SCALE ANALYSIS] AT SER-2</scope>
    <scope>CLEAVAGE OF INITIATOR METHIONINE [LARGE SCALE ANALYSIS]</scope>
    <scope>IDENTIFICATION BY MASS SPECTROMETRY [LARGE SCALE ANALYSIS]</scope>
    <source>
        <strain>YAL6B</strain>
    </source>
</reference>
<reference key="8">
    <citation type="journal article" date="2009" name="Science">
        <title>Global analysis of Cdk1 substrate phosphorylation sites provides insights into evolution.</title>
        <authorList>
            <person name="Holt L.J."/>
            <person name="Tuch B.B."/>
            <person name="Villen J."/>
            <person name="Johnson A.D."/>
            <person name="Gygi S.P."/>
            <person name="Morgan D.O."/>
        </authorList>
    </citation>
    <scope>IDENTIFICATION BY MASS SPECTROMETRY [LARGE SCALE ANALYSIS]</scope>
</reference>
<reference key="9">
    <citation type="journal article" date="2011" name="Genes Dev.">
        <title>Restriction of histone gene transcription to S phase by phosphorylation of a chromatin boundary protein.</title>
        <authorList>
            <person name="Kurat C.F."/>
            <person name="Lambert J.P."/>
            <person name="van Dyk D."/>
            <person name="Tsui K."/>
            <person name="van Bakel H."/>
            <person name="Kaluarachchi S."/>
            <person name="Friesen H."/>
            <person name="Kainth P."/>
            <person name="Nislow C."/>
            <person name="Figeys D."/>
            <person name="Fillingham J."/>
            <person name="Andrews B.J."/>
        </authorList>
    </citation>
    <scope>INTERACTION WITH YTA7</scope>
</reference>
<reference key="10">
    <citation type="journal article" date="2012" name="Proc. Natl. Acad. Sci. U.S.A.">
        <title>N-terminal acetylome analyses and functional insights of the N-terminal acetyltransferase NatB.</title>
        <authorList>
            <person name="Van Damme P."/>
            <person name="Lasa M."/>
            <person name="Polevoda B."/>
            <person name="Gazquez C."/>
            <person name="Elosegui-Artola A."/>
            <person name="Kim D.S."/>
            <person name="De Juan-Pardo E."/>
            <person name="Demeyer K."/>
            <person name="Hole K."/>
            <person name="Larrea E."/>
            <person name="Timmerman E."/>
            <person name="Prieto J."/>
            <person name="Arnesen T."/>
            <person name="Sherman F."/>
            <person name="Gevaert K."/>
            <person name="Aldabe R."/>
        </authorList>
    </citation>
    <scope>ACETYLATION [LARGE SCALE ANALYSIS] AT SER-2</scope>
    <scope>CLEAVAGE OF INITIATOR METHIONINE [LARGE SCALE ANALYSIS]</scope>
    <scope>IDENTIFICATION BY MASS SPECTROMETRY [LARGE SCALE ANALYSIS]</scope>
</reference>
<gene>
    <name type="primary">CKB1</name>
    <name type="ordered locus">YGL019W</name>
</gene>
<sequence>MSQEFVEDYSRTGSSDDEDSGAYDEWIPSFCSRFGHEYFCQVPTEFIEDDFNMTSLSQEVPHYRKALDLILDLEAMSDEEEDEDDVVEEDEVDQEMQSNDGHDEGKRRNKSPVVNKSIIEHAAEQLYGLIHARFILTKPGLQAMAEKFDHKEFGTCPRYYCNGMQLLPCGLSDTVGKHTVRLYCPSCQDLYLPQSSRFLCLEGAFWGTSFPGVFLKHFKELEEYVERKSKESYELKVFGFRINDEAVSGPRMKWLRQYPSTEEDWEEFAKCEFETPAV</sequence>
<comment type="function">
    <text evidence="1">Regulatory subunit of casein kinase II/CK2 (By similarity). As part of the kinase complex regulates the basal catalytic activity of the alpha subunit a constitutively active serine/threonine-protein kinase that phosphorylates a large number of substrates containing acidic residues C-terminal to the phosphorylated serine or threonine (By similarity).</text>
</comment>
<comment type="subunit">
    <text evidence="3 5">Tetramer composed of an alpha subunit, an alpha' subunit, one beta subunit and one beta' subunit (PubMed:12242279). Interacts with FACT subunits POB3 and SPT16 (PubMed:12242279). interacts with YTA7 (PubMed:22156209).</text>
</comment>
<comment type="interaction">
    <interactant intactId="EBI-9563">
        <id>P43639</id>
    </interactant>
    <interactant intactId="EBI-9533">
        <id>P15790</id>
        <label>CKA1</label>
    </interactant>
    <organismsDiffer>false</organismsDiffer>
    <experiments>13</experiments>
</comment>
<comment type="interaction">
    <interactant intactId="EBI-9563">
        <id>P43639</id>
    </interactant>
    <interactant intactId="EBI-9548">
        <id>P19454</id>
        <label>CKA2</label>
    </interactant>
    <organismsDiffer>false</organismsDiffer>
    <experiments>13</experiments>
</comment>
<comment type="interaction">
    <interactant intactId="EBI-9563">
        <id>P43639</id>
    </interactant>
    <interactant intactId="EBI-9578">
        <id>P38930</id>
        <label>CKB2</label>
    </interactant>
    <organismsDiffer>false</organismsDiffer>
    <experiments>7</experiments>
</comment>
<comment type="interaction">
    <interactant intactId="EBI-9563">
        <id>P43639</id>
    </interactant>
    <interactant intactId="EBI-1878">
        <id>P53254</id>
        <label>UTP22</label>
    </interactant>
    <organismsDiffer>false</organismsDiffer>
    <experiments>4</experiments>
</comment>
<comment type="PTM">
    <text evidence="1">Phosphorylated by alpha subunit.</text>
</comment>
<comment type="miscellaneous">
    <text evidence="4">Present with 8120 molecules/cell in log phase SD medium.</text>
</comment>
<comment type="similarity">
    <text evidence="6">Belongs to the casein kinase 2 subunit beta family.</text>
</comment>
<name>CSK2B_YEAST</name>
<protein>
    <recommendedName>
        <fullName>Casein kinase II subunit beta</fullName>
        <shortName>CK II beta</shortName>
    </recommendedName>
</protein>
<dbReference type="EMBL" id="U21283">
    <property type="protein sequence ID" value="AAA86829.1"/>
    <property type="molecule type" value="Genomic_DNA"/>
</dbReference>
<dbReference type="EMBL" id="Z72541">
    <property type="protein sequence ID" value="CAA96719.1"/>
    <property type="molecule type" value="Genomic_DNA"/>
</dbReference>
<dbReference type="EMBL" id="BK006941">
    <property type="protein sequence ID" value="DAA08079.1"/>
    <property type="molecule type" value="Genomic_DNA"/>
</dbReference>
<dbReference type="PIR" id="A56421">
    <property type="entry name" value="A56421"/>
</dbReference>
<dbReference type="RefSeq" id="NP_011496.3">
    <property type="nucleotide sequence ID" value="NM_001180884.3"/>
</dbReference>
<dbReference type="SMR" id="P43639"/>
<dbReference type="BioGRID" id="33227">
    <property type="interactions" value="567"/>
</dbReference>
<dbReference type="ComplexPortal" id="CPX-581">
    <property type="entry name" value="Casein kinase II complex, CKA1-CKA2 variant"/>
</dbReference>
<dbReference type="ComplexPortal" id="CPX-769">
    <property type="entry name" value="Casein kinase II complex, CKA1 variant"/>
</dbReference>
<dbReference type="ComplexPortal" id="CPX-770">
    <property type="entry name" value="Casein kinase II complex, CKA2 variant"/>
</dbReference>
<dbReference type="ComplexPortal" id="CPX-771">
    <property type="entry name" value="UTP-C complex variant 2"/>
</dbReference>
<dbReference type="ComplexPortal" id="CPX-772">
    <property type="entry name" value="UTP-C complex variant 1"/>
</dbReference>
<dbReference type="ComplexPortal" id="CPX-773">
    <property type="entry name" value="UTP-C complex variant 3"/>
</dbReference>
<dbReference type="ComplexPortal" id="CPX-774">
    <property type="entry name" value="CURI complex variant 1"/>
</dbReference>
<dbReference type="ComplexPortal" id="CPX-775">
    <property type="entry name" value="CURI complex variant 2"/>
</dbReference>
<dbReference type="ComplexPortal" id="CPX-776">
    <property type="entry name" value="CURI complex variant 3"/>
</dbReference>
<dbReference type="DIP" id="DIP-282N"/>
<dbReference type="FunCoup" id="P43639">
    <property type="interactions" value="842"/>
</dbReference>
<dbReference type="IntAct" id="P43639">
    <property type="interactions" value="81"/>
</dbReference>
<dbReference type="MINT" id="P43639"/>
<dbReference type="STRING" id="4932.YGL019W"/>
<dbReference type="iPTMnet" id="P43639"/>
<dbReference type="PaxDb" id="4932-YGL019W"/>
<dbReference type="PeptideAtlas" id="P43639"/>
<dbReference type="EnsemblFungi" id="YGL019W_mRNA">
    <property type="protein sequence ID" value="YGL019W"/>
    <property type="gene ID" value="YGL019W"/>
</dbReference>
<dbReference type="GeneID" id="852865"/>
<dbReference type="KEGG" id="sce:YGL019W"/>
<dbReference type="AGR" id="SGD:S000002987"/>
<dbReference type="SGD" id="S000002987">
    <property type="gene designation" value="CKB1"/>
</dbReference>
<dbReference type="VEuPathDB" id="FungiDB:YGL019W"/>
<dbReference type="eggNOG" id="KOG3092">
    <property type="taxonomic scope" value="Eukaryota"/>
</dbReference>
<dbReference type="GeneTree" id="ENSGT00390000003781"/>
<dbReference type="HOGENOM" id="CLU_034027_3_0_1"/>
<dbReference type="InParanoid" id="P43639"/>
<dbReference type="OMA" id="QNGSPMA"/>
<dbReference type="OrthoDB" id="2275560at2759"/>
<dbReference type="BioCyc" id="YEAST:G3O-30539-MONOMER"/>
<dbReference type="BioGRID-ORCS" id="852865">
    <property type="hits" value="5 hits in 10 CRISPR screens"/>
</dbReference>
<dbReference type="PRO" id="PR:P43639"/>
<dbReference type="Proteomes" id="UP000002311">
    <property type="component" value="Chromosome VII"/>
</dbReference>
<dbReference type="RNAct" id="P43639">
    <property type="molecule type" value="protein"/>
</dbReference>
<dbReference type="GO" id="GO:0032545">
    <property type="term" value="C:CURI complex"/>
    <property type="evidence" value="ECO:0000353"/>
    <property type="project" value="ComplexPortal"/>
</dbReference>
<dbReference type="GO" id="GO:0005737">
    <property type="term" value="C:cytoplasm"/>
    <property type="evidence" value="ECO:0000318"/>
    <property type="project" value="GO_Central"/>
</dbReference>
<dbReference type="GO" id="GO:0005730">
    <property type="term" value="C:nucleolus"/>
    <property type="evidence" value="ECO:0000314"/>
    <property type="project" value="ComplexPortal"/>
</dbReference>
<dbReference type="GO" id="GO:0005654">
    <property type="term" value="C:nucleoplasm"/>
    <property type="evidence" value="ECO:0000304"/>
    <property type="project" value="Reactome"/>
</dbReference>
<dbReference type="GO" id="GO:0005956">
    <property type="term" value="C:protein kinase CK2 complex"/>
    <property type="evidence" value="ECO:0000314"/>
    <property type="project" value="SGD"/>
</dbReference>
<dbReference type="GO" id="GO:0032040">
    <property type="term" value="C:small-subunit processome"/>
    <property type="evidence" value="ECO:0000353"/>
    <property type="project" value="ComplexPortal"/>
</dbReference>
<dbReference type="GO" id="GO:0034456">
    <property type="term" value="C:UTP-C complex"/>
    <property type="evidence" value="ECO:0000314"/>
    <property type="project" value="SGD"/>
</dbReference>
<dbReference type="GO" id="GO:0019887">
    <property type="term" value="F:protein kinase regulator activity"/>
    <property type="evidence" value="ECO:0000314"/>
    <property type="project" value="SGD"/>
</dbReference>
<dbReference type="GO" id="GO:0030291">
    <property type="term" value="F:protein serine/threonine kinase inhibitor activity"/>
    <property type="evidence" value="ECO:0000314"/>
    <property type="project" value="SGD"/>
</dbReference>
<dbReference type="GO" id="GO:0006974">
    <property type="term" value="P:DNA damage response"/>
    <property type="evidence" value="ECO:0000314"/>
    <property type="project" value="SGD"/>
</dbReference>
<dbReference type="GO" id="GO:0030490">
    <property type="term" value="P:maturation of SSU-rRNA"/>
    <property type="evidence" value="ECO:0000303"/>
    <property type="project" value="ComplexPortal"/>
</dbReference>
<dbReference type="GO" id="GO:0042790">
    <property type="term" value="P:nucleolar large rRNA transcription by RNA polymerase I"/>
    <property type="evidence" value="ECO:0000314"/>
    <property type="project" value="ComplexPortal"/>
</dbReference>
<dbReference type="GO" id="GO:0051726">
    <property type="term" value="P:regulation of cell cycle"/>
    <property type="evidence" value="ECO:0000314"/>
    <property type="project" value="ComplexPortal"/>
</dbReference>
<dbReference type="GO" id="GO:0060962">
    <property type="term" value="P:regulation of ribosomal protein gene transcription by RNA polymerase II"/>
    <property type="evidence" value="ECO:0000314"/>
    <property type="project" value="ComplexPortal"/>
</dbReference>
<dbReference type="GO" id="GO:0006356">
    <property type="term" value="P:regulation of transcription by RNA polymerase I"/>
    <property type="evidence" value="ECO:0000314"/>
    <property type="project" value="SGD"/>
</dbReference>
<dbReference type="GO" id="GO:0006359">
    <property type="term" value="P:regulation of transcription by RNA polymerase III"/>
    <property type="evidence" value="ECO:0000314"/>
    <property type="project" value="SGD"/>
</dbReference>
<dbReference type="GO" id="GO:0000028">
    <property type="term" value="P:ribosomal small subunit assembly"/>
    <property type="evidence" value="ECO:0000303"/>
    <property type="project" value="ComplexPortal"/>
</dbReference>
<dbReference type="FunFam" id="2.20.25.20:FF:000001">
    <property type="entry name" value="Casein kinase II subunit beta"/>
    <property type="match status" value="1"/>
</dbReference>
<dbReference type="Gene3D" id="2.20.25.20">
    <property type="match status" value="1"/>
</dbReference>
<dbReference type="Gene3D" id="1.10.1820.10">
    <property type="entry name" value="protein kinase ck2 holoenzyme, chain C, domain 1"/>
    <property type="match status" value="1"/>
</dbReference>
<dbReference type="InterPro" id="IPR016149">
    <property type="entry name" value="Casein_kin_II_reg-sub_N"/>
</dbReference>
<dbReference type="InterPro" id="IPR035991">
    <property type="entry name" value="Casein_kinase_II_beta-like"/>
</dbReference>
<dbReference type="InterPro" id="IPR000704">
    <property type="entry name" value="Casein_kinase_II_reg-sub"/>
</dbReference>
<dbReference type="PANTHER" id="PTHR11740">
    <property type="entry name" value="CASEIN KINASE II SUBUNIT BETA"/>
    <property type="match status" value="1"/>
</dbReference>
<dbReference type="PANTHER" id="PTHR11740:SF0">
    <property type="entry name" value="CASEIN KINASE II SUBUNIT BETA"/>
    <property type="match status" value="1"/>
</dbReference>
<dbReference type="Pfam" id="PF01214">
    <property type="entry name" value="CK_II_beta"/>
    <property type="match status" value="1"/>
</dbReference>
<dbReference type="PRINTS" id="PR00472">
    <property type="entry name" value="CASNKINASEII"/>
</dbReference>
<dbReference type="SMART" id="SM01085">
    <property type="entry name" value="CK_II_beta"/>
    <property type="match status" value="1"/>
</dbReference>
<dbReference type="SUPFAM" id="SSF57798">
    <property type="entry name" value="Casein kinase II beta subunit"/>
    <property type="match status" value="1"/>
</dbReference>
<dbReference type="PROSITE" id="PS01101">
    <property type="entry name" value="CK2_BETA"/>
    <property type="match status" value="1"/>
</dbReference>
<organism>
    <name type="scientific">Saccharomyces cerevisiae (strain ATCC 204508 / S288c)</name>
    <name type="common">Baker's yeast</name>
    <dbReference type="NCBI Taxonomy" id="559292"/>
    <lineage>
        <taxon>Eukaryota</taxon>
        <taxon>Fungi</taxon>
        <taxon>Dikarya</taxon>
        <taxon>Ascomycota</taxon>
        <taxon>Saccharomycotina</taxon>
        <taxon>Saccharomycetes</taxon>
        <taxon>Saccharomycetales</taxon>
        <taxon>Saccharomycetaceae</taxon>
        <taxon>Saccharomyces</taxon>
    </lineage>
</organism>
<evidence type="ECO:0000250" key="1">
    <source>
        <dbReference type="UniProtKB" id="P67870"/>
    </source>
</evidence>
<evidence type="ECO:0000256" key="2">
    <source>
        <dbReference type="SAM" id="MobiDB-lite"/>
    </source>
</evidence>
<evidence type="ECO:0000269" key="3">
    <source>
    </source>
</evidence>
<evidence type="ECO:0000269" key="4">
    <source>
    </source>
</evidence>
<evidence type="ECO:0000269" key="5">
    <source>
    </source>
</evidence>
<evidence type="ECO:0000305" key="6"/>
<evidence type="ECO:0007744" key="7">
    <source>
    </source>
</evidence>
<evidence type="ECO:0007744" key="8">
    <source>
    </source>
</evidence>
<keyword id="KW-0007">Acetylation</keyword>
<keyword id="KW-0903">Direct protein sequencing</keyword>
<keyword id="KW-0597">Phosphoprotein</keyword>
<keyword id="KW-1185">Reference proteome</keyword>
<proteinExistence type="evidence at protein level"/>